<gene>
    <name evidence="2" type="primary">nuoB</name>
    <name type="ordered locus">NE1776</name>
</gene>
<protein>
    <recommendedName>
        <fullName evidence="2">NADH-quinone oxidoreductase subunit B</fullName>
        <ecNumber evidence="2">7.1.1.-</ecNumber>
    </recommendedName>
    <alternativeName>
        <fullName evidence="2">NADH dehydrogenase I subunit B</fullName>
    </alternativeName>
    <alternativeName>
        <fullName evidence="2">NDH-1 subunit B</fullName>
    </alternativeName>
</protein>
<accession>Q82TU4</accession>
<keyword id="KW-0004">4Fe-4S</keyword>
<keyword id="KW-0997">Cell inner membrane</keyword>
<keyword id="KW-1003">Cell membrane</keyword>
<keyword id="KW-0408">Iron</keyword>
<keyword id="KW-0411">Iron-sulfur</keyword>
<keyword id="KW-0472">Membrane</keyword>
<keyword id="KW-0479">Metal-binding</keyword>
<keyword id="KW-0520">NAD</keyword>
<keyword id="KW-0874">Quinone</keyword>
<keyword id="KW-1185">Reference proteome</keyword>
<keyword id="KW-1278">Translocase</keyword>
<keyword id="KW-0813">Transport</keyword>
<keyword id="KW-0830">Ubiquinone</keyword>
<reference key="1">
    <citation type="journal article" date="2003" name="J. Bacteriol.">
        <title>Complete genome sequence of the ammonia-oxidizing bacterium and obligate chemolithoautotroph Nitrosomonas europaea.</title>
        <authorList>
            <person name="Chain P."/>
            <person name="Lamerdin J.E."/>
            <person name="Larimer F.W."/>
            <person name="Regala W."/>
            <person name="Lao V."/>
            <person name="Land M.L."/>
            <person name="Hauser L."/>
            <person name="Hooper A.B."/>
            <person name="Klotz M.G."/>
            <person name="Norton J."/>
            <person name="Sayavedra-Soto L.A."/>
            <person name="Arciero D.M."/>
            <person name="Hommes N.G."/>
            <person name="Whittaker M.M."/>
            <person name="Arp D.J."/>
        </authorList>
    </citation>
    <scope>NUCLEOTIDE SEQUENCE [LARGE SCALE GENOMIC DNA]</scope>
    <source>
        <strain>ATCC 19718 / CIP 103999 / KCTC 2705 / NBRC 14298</strain>
    </source>
</reference>
<name>NUOB_NITEU</name>
<dbReference type="EC" id="7.1.1.-" evidence="2"/>
<dbReference type="EMBL" id="AL954747">
    <property type="protein sequence ID" value="CAD85687.1"/>
    <property type="molecule type" value="Genomic_DNA"/>
</dbReference>
<dbReference type="RefSeq" id="WP_011112327.1">
    <property type="nucleotide sequence ID" value="NC_004757.1"/>
</dbReference>
<dbReference type="SMR" id="Q82TU4"/>
<dbReference type="STRING" id="228410.NE1776"/>
<dbReference type="GeneID" id="87104937"/>
<dbReference type="KEGG" id="neu:NE1776"/>
<dbReference type="eggNOG" id="COG0377">
    <property type="taxonomic scope" value="Bacteria"/>
</dbReference>
<dbReference type="HOGENOM" id="CLU_055737_7_3_4"/>
<dbReference type="OrthoDB" id="9786737at2"/>
<dbReference type="PhylomeDB" id="Q82TU4"/>
<dbReference type="Proteomes" id="UP000001416">
    <property type="component" value="Chromosome"/>
</dbReference>
<dbReference type="GO" id="GO:0005886">
    <property type="term" value="C:plasma membrane"/>
    <property type="evidence" value="ECO:0007669"/>
    <property type="project" value="UniProtKB-SubCell"/>
</dbReference>
<dbReference type="GO" id="GO:0045271">
    <property type="term" value="C:respiratory chain complex I"/>
    <property type="evidence" value="ECO:0007669"/>
    <property type="project" value="TreeGrafter"/>
</dbReference>
<dbReference type="GO" id="GO:0051539">
    <property type="term" value="F:4 iron, 4 sulfur cluster binding"/>
    <property type="evidence" value="ECO:0007669"/>
    <property type="project" value="UniProtKB-KW"/>
</dbReference>
<dbReference type="GO" id="GO:0005506">
    <property type="term" value="F:iron ion binding"/>
    <property type="evidence" value="ECO:0007669"/>
    <property type="project" value="UniProtKB-UniRule"/>
</dbReference>
<dbReference type="GO" id="GO:0008137">
    <property type="term" value="F:NADH dehydrogenase (ubiquinone) activity"/>
    <property type="evidence" value="ECO:0007669"/>
    <property type="project" value="InterPro"/>
</dbReference>
<dbReference type="GO" id="GO:0050136">
    <property type="term" value="F:NADH:ubiquinone reductase (non-electrogenic) activity"/>
    <property type="evidence" value="ECO:0007669"/>
    <property type="project" value="UniProtKB-UniRule"/>
</dbReference>
<dbReference type="GO" id="GO:0048038">
    <property type="term" value="F:quinone binding"/>
    <property type="evidence" value="ECO:0007669"/>
    <property type="project" value="UniProtKB-KW"/>
</dbReference>
<dbReference type="GO" id="GO:0009060">
    <property type="term" value="P:aerobic respiration"/>
    <property type="evidence" value="ECO:0007669"/>
    <property type="project" value="TreeGrafter"/>
</dbReference>
<dbReference type="GO" id="GO:0015990">
    <property type="term" value="P:electron transport coupled proton transport"/>
    <property type="evidence" value="ECO:0007669"/>
    <property type="project" value="TreeGrafter"/>
</dbReference>
<dbReference type="FunFam" id="3.40.50.12280:FF:000001">
    <property type="entry name" value="NADH-quinone oxidoreductase subunit B 2"/>
    <property type="match status" value="1"/>
</dbReference>
<dbReference type="Gene3D" id="3.40.50.12280">
    <property type="match status" value="1"/>
</dbReference>
<dbReference type="HAMAP" id="MF_01356">
    <property type="entry name" value="NDH1_NuoB"/>
    <property type="match status" value="1"/>
</dbReference>
<dbReference type="InterPro" id="IPR006137">
    <property type="entry name" value="NADH_UbQ_OxRdtase-like_20kDa"/>
</dbReference>
<dbReference type="InterPro" id="IPR006138">
    <property type="entry name" value="NADH_UQ_OxRdtase_20Kd_su"/>
</dbReference>
<dbReference type="NCBIfam" id="TIGR01957">
    <property type="entry name" value="nuoB_fam"/>
    <property type="match status" value="1"/>
</dbReference>
<dbReference type="NCBIfam" id="NF005012">
    <property type="entry name" value="PRK06411.1"/>
    <property type="match status" value="1"/>
</dbReference>
<dbReference type="PANTHER" id="PTHR11995">
    <property type="entry name" value="NADH DEHYDROGENASE"/>
    <property type="match status" value="1"/>
</dbReference>
<dbReference type="PANTHER" id="PTHR11995:SF14">
    <property type="entry name" value="NADH DEHYDROGENASE [UBIQUINONE] IRON-SULFUR PROTEIN 7, MITOCHONDRIAL"/>
    <property type="match status" value="1"/>
</dbReference>
<dbReference type="Pfam" id="PF01058">
    <property type="entry name" value="Oxidored_q6"/>
    <property type="match status" value="1"/>
</dbReference>
<dbReference type="SUPFAM" id="SSF56770">
    <property type="entry name" value="HydA/Nqo6-like"/>
    <property type="match status" value="1"/>
</dbReference>
<dbReference type="PROSITE" id="PS01150">
    <property type="entry name" value="COMPLEX1_20K"/>
    <property type="match status" value="1"/>
</dbReference>
<organism>
    <name type="scientific">Nitrosomonas europaea (strain ATCC 19718 / CIP 103999 / KCTC 2705 / NBRC 14298)</name>
    <dbReference type="NCBI Taxonomy" id="228410"/>
    <lineage>
        <taxon>Bacteria</taxon>
        <taxon>Pseudomonadati</taxon>
        <taxon>Pseudomonadota</taxon>
        <taxon>Betaproteobacteria</taxon>
        <taxon>Nitrosomonadales</taxon>
        <taxon>Nitrosomonadaceae</taxon>
        <taxon>Nitrosomonas</taxon>
    </lineage>
</organism>
<evidence type="ECO:0000250" key="1"/>
<evidence type="ECO:0000255" key="2">
    <source>
        <dbReference type="HAMAP-Rule" id="MF_01356"/>
    </source>
</evidence>
<proteinExistence type="inferred from homology"/>
<comment type="function">
    <text evidence="1">NDH-1 shuttles electrons from NADH, via FMN and iron-sulfur (Fe-S) centers, to quinones in the respiratory chain. Couples the redox reaction to proton translocation (for every two electrons transferred, four hydrogen ions are translocated across the cytoplasmic membrane), and thus conserves the redox energy in a proton gradient (By similarity).</text>
</comment>
<comment type="catalytic activity">
    <reaction evidence="2">
        <text>a quinone + NADH + 5 H(+)(in) = a quinol + NAD(+) + 4 H(+)(out)</text>
        <dbReference type="Rhea" id="RHEA:57888"/>
        <dbReference type="ChEBI" id="CHEBI:15378"/>
        <dbReference type="ChEBI" id="CHEBI:24646"/>
        <dbReference type="ChEBI" id="CHEBI:57540"/>
        <dbReference type="ChEBI" id="CHEBI:57945"/>
        <dbReference type="ChEBI" id="CHEBI:132124"/>
    </reaction>
</comment>
<comment type="cofactor">
    <cofactor evidence="2">
        <name>[4Fe-4S] cluster</name>
        <dbReference type="ChEBI" id="CHEBI:49883"/>
    </cofactor>
    <text evidence="2">Binds 1 [4Fe-4S] cluster.</text>
</comment>
<comment type="subunit">
    <text evidence="2">NDH-1 is composed of 14 different subunits. Subunits NuoB, C, D, E, F, and G constitute the peripheral sector of the complex.</text>
</comment>
<comment type="subcellular location">
    <subcellularLocation>
        <location evidence="2">Cell inner membrane</location>
        <topology evidence="2">Peripheral membrane protein</topology>
        <orientation evidence="2">Cytoplasmic side</orientation>
    </subcellularLocation>
</comment>
<comment type="similarity">
    <text evidence="2">Belongs to the complex I 20 kDa subunit family.</text>
</comment>
<feature type="chain" id="PRO_0000358434" description="NADH-quinone oxidoreductase subunit B">
    <location>
        <begin position="1"/>
        <end position="158"/>
    </location>
</feature>
<feature type="binding site" evidence="2">
    <location>
        <position position="37"/>
    </location>
    <ligand>
        <name>[4Fe-4S] cluster</name>
        <dbReference type="ChEBI" id="CHEBI:49883"/>
    </ligand>
</feature>
<feature type="binding site" evidence="2">
    <location>
        <position position="38"/>
    </location>
    <ligand>
        <name>[4Fe-4S] cluster</name>
        <dbReference type="ChEBI" id="CHEBI:49883"/>
    </ligand>
</feature>
<feature type="binding site" evidence="2">
    <location>
        <position position="102"/>
    </location>
    <ligand>
        <name>[4Fe-4S] cluster</name>
        <dbReference type="ChEBI" id="CHEBI:49883"/>
    </ligand>
</feature>
<feature type="binding site" evidence="2">
    <location>
        <position position="132"/>
    </location>
    <ligand>
        <name>[4Fe-4S] cluster</name>
        <dbReference type="ChEBI" id="CHEBI:49883"/>
    </ligand>
</feature>
<sequence length="158" mass="17429">MGIEGVLDKGFVTTSLDSLINWGRTGSMWPMTFGLACCAVEMMQTGASRYDLDRFGIVFRPSPRQSDVMIVAGTLCNKMAPALRKVYDQMAEPRWVISMGSCANGGGYYHYSYSVVRGCDRIVPVDIYVPGCPPTAEALLYGIIQLQNKIKRTNTIAR</sequence>